<accession>B2SCQ3</accession>
<keyword id="KW-0560">Oxidoreductase</keyword>
<keyword id="KW-0819">tRNA processing</keyword>
<organism>
    <name type="scientific">Brucella abortus (strain S19)</name>
    <dbReference type="NCBI Taxonomy" id="430066"/>
    <lineage>
        <taxon>Bacteria</taxon>
        <taxon>Pseudomonadati</taxon>
        <taxon>Pseudomonadota</taxon>
        <taxon>Alphaproteobacteria</taxon>
        <taxon>Hyphomicrobiales</taxon>
        <taxon>Brucellaceae</taxon>
        <taxon>Brucella/Ochrobactrum group</taxon>
        <taxon>Brucella</taxon>
    </lineage>
</organism>
<sequence>MSNLPFTVAALYCFAPLPQYESLREPLAQLCCANGIKGTLLLAAEGINGTVAGSAGAIEKLIAHITAIPGLGEPELKYSHASEMPFHRMKVRLKREIVTMGVEGIDPLKSVGTYIAPKDWNALIADENTVVVDKRNDYEYAIGTFEGAIDPQTRTFREFPEWVKQNRDRLEGKKIAMFCTGGIRCEKATAFVKGLGFDDVYHLKGGILKYLEEVPREQSMWNGECFVFDERVAVGHGLAESDVELCRACRRPLTPQDKLSQFFEEGVSCAGCYAERTPEDRARYAERQKQVKLAEKRGANKHIGS</sequence>
<name>TRHO_BRUA1</name>
<comment type="function">
    <text evidence="1">Catalyzes oxygen-dependent 5-hydroxyuridine (ho5U) modification at position 34 in tRNAs.</text>
</comment>
<comment type="catalytic activity">
    <reaction evidence="1">
        <text>uridine(34) in tRNA + AH2 + O2 = 5-hydroxyuridine(34) in tRNA + A + H2O</text>
        <dbReference type="Rhea" id="RHEA:64224"/>
        <dbReference type="Rhea" id="RHEA-COMP:11727"/>
        <dbReference type="Rhea" id="RHEA-COMP:13381"/>
        <dbReference type="ChEBI" id="CHEBI:13193"/>
        <dbReference type="ChEBI" id="CHEBI:15377"/>
        <dbReference type="ChEBI" id="CHEBI:15379"/>
        <dbReference type="ChEBI" id="CHEBI:17499"/>
        <dbReference type="ChEBI" id="CHEBI:65315"/>
        <dbReference type="ChEBI" id="CHEBI:136877"/>
    </reaction>
</comment>
<comment type="similarity">
    <text evidence="1">Belongs to the TrhO family.</text>
</comment>
<proteinExistence type="inferred from homology"/>
<dbReference type="EC" id="1.14.-.-" evidence="1"/>
<dbReference type="EMBL" id="CP000888">
    <property type="protein sequence ID" value="ACD73607.1"/>
    <property type="molecule type" value="Genomic_DNA"/>
</dbReference>
<dbReference type="RefSeq" id="WP_002966492.1">
    <property type="nucleotide sequence ID" value="NC_010740.1"/>
</dbReference>
<dbReference type="SMR" id="B2SCQ3"/>
<dbReference type="KEGG" id="bmc:BAbS19_II00800"/>
<dbReference type="HOGENOM" id="CLU_038878_0_0_5"/>
<dbReference type="Proteomes" id="UP000002565">
    <property type="component" value="Chromosome 2"/>
</dbReference>
<dbReference type="GO" id="GO:0016705">
    <property type="term" value="F:oxidoreductase activity, acting on paired donors, with incorporation or reduction of molecular oxygen"/>
    <property type="evidence" value="ECO:0007669"/>
    <property type="project" value="UniProtKB-UniRule"/>
</dbReference>
<dbReference type="GO" id="GO:0006400">
    <property type="term" value="P:tRNA modification"/>
    <property type="evidence" value="ECO:0007669"/>
    <property type="project" value="UniProtKB-UniRule"/>
</dbReference>
<dbReference type="CDD" id="cd01518">
    <property type="entry name" value="RHOD_YceA"/>
    <property type="match status" value="1"/>
</dbReference>
<dbReference type="Gene3D" id="3.30.70.100">
    <property type="match status" value="1"/>
</dbReference>
<dbReference type="Gene3D" id="3.40.250.10">
    <property type="entry name" value="Rhodanese-like domain"/>
    <property type="match status" value="1"/>
</dbReference>
<dbReference type="HAMAP" id="MF_00469">
    <property type="entry name" value="TrhO"/>
    <property type="match status" value="1"/>
</dbReference>
<dbReference type="InterPro" id="IPR001763">
    <property type="entry name" value="Rhodanese-like_dom"/>
</dbReference>
<dbReference type="InterPro" id="IPR036873">
    <property type="entry name" value="Rhodanese-like_dom_sf"/>
</dbReference>
<dbReference type="InterPro" id="IPR020936">
    <property type="entry name" value="TrhO"/>
</dbReference>
<dbReference type="InterPro" id="IPR040503">
    <property type="entry name" value="TRHO_N"/>
</dbReference>
<dbReference type="NCBIfam" id="NF001136">
    <property type="entry name" value="PRK00142.1-4"/>
    <property type="match status" value="1"/>
</dbReference>
<dbReference type="PANTHER" id="PTHR43268:SF3">
    <property type="entry name" value="RHODANESE-LIKE DOMAIN-CONTAINING PROTEIN 7-RELATED"/>
    <property type="match status" value="1"/>
</dbReference>
<dbReference type="PANTHER" id="PTHR43268">
    <property type="entry name" value="THIOSULFATE SULFURTRANSFERASE/RHODANESE-LIKE DOMAIN-CONTAINING PROTEIN 2"/>
    <property type="match status" value="1"/>
</dbReference>
<dbReference type="Pfam" id="PF00581">
    <property type="entry name" value="Rhodanese"/>
    <property type="match status" value="1"/>
</dbReference>
<dbReference type="Pfam" id="PF17773">
    <property type="entry name" value="UPF0176_N"/>
    <property type="match status" value="1"/>
</dbReference>
<dbReference type="SMART" id="SM00450">
    <property type="entry name" value="RHOD"/>
    <property type="match status" value="1"/>
</dbReference>
<dbReference type="SUPFAM" id="SSF52821">
    <property type="entry name" value="Rhodanese/Cell cycle control phosphatase"/>
    <property type="match status" value="1"/>
</dbReference>
<dbReference type="PROSITE" id="PS50206">
    <property type="entry name" value="RHODANESE_3"/>
    <property type="match status" value="1"/>
</dbReference>
<feature type="chain" id="PRO_1000200343" description="tRNA uridine(34) hydroxylase">
    <location>
        <begin position="1"/>
        <end position="305"/>
    </location>
</feature>
<feature type="domain" description="Rhodanese" evidence="1">
    <location>
        <begin position="125"/>
        <end position="219"/>
    </location>
</feature>
<feature type="active site" description="Cysteine persulfide intermediate" evidence="1">
    <location>
        <position position="179"/>
    </location>
</feature>
<gene>
    <name evidence="1" type="primary">trhO</name>
    <name type="ordered locus">BAbS19_II00800</name>
</gene>
<reference key="1">
    <citation type="journal article" date="2008" name="PLoS ONE">
        <title>Genome sequence of Brucella abortus vaccine strain S19 compared to virulent strains yields candidate virulence genes.</title>
        <authorList>
            <person name="Crasta O.R."/>
            <person name="Folkerts O."/>
            <person name="Fei Z."/>
            <person name="Mane S.P."/>
            <person name="Evans C."/>
            <person name="Martino-Catt S."/>
            <person name="Bricker B."/>
            <person name="Yu G."/>
            <person name="Du L."/>
            <person name="Sobral B.W."/>
        </authorList>
    </citation>
    <scope>NUCLEOTIDE SEQUENCE [LARGE SCALE GENOMIC DNA]</scope>
    <source>
        <strain>S19</strain>
    </source>
</reference>
<protein>
    <recommendedName>
        <fullName evidence="1">tRNA uridine(34) hydroxylase</fullName>
        <ecNumber evidence="1">1.14.-.-</ecNumber>
    </recommendedName>
    <alternativeName>
        <fullName evidence="1">tRNA hydroxylation protein O</fullName>
    </alternativeName>
</protein>
<evidence type="ECO:0000255" key="1">
    <source>
        <dbReference type="HAMAP-Rule" id="MF_00469"/>
    </source>
</evidence>